<protein>
    <recommendedName>
        <fullName>Non-structural protein NS-S</fullName>
    </recommendedName>
</protein>
<proteinExistence type="inferred from homology"/>
<evidence type="ECO:0000250" key="1"/>
<evidence type="ECO:0000269" key="2">
    <source>
    </source>
</evidence>
<evidence type="ECO:0000305" key="3"/>
<comment type="function">
    <text evidence="1 2">Inhibits host transcriptional machinery, by producing modifications to the phosphorylation state of the C-terminal domain (CTD) of RNA polymerase II. Inhibits phosphorylation at serine 2 in the heptapeptide repeat (YSPTSPS) of the CTD of RNA polymerase II, suggesting that the elongation step of transcription and/or 3'-end processing is prevented. Inhibition of host transcription machinery leads to shut off of host cell protein synthesis and inhibition of the host innate immune response. NSs also seems to be involved in the nuclear relocalization of host PABP1 (By similarity).</text>
</comment>
<comment type="similarity">
    <text evidence="3">Belongs to the orthobunyaviruses NS-S protein family.</text>
</comment>
<reference key="1">
    <citation type="submission" date="2002-07" db="EMBL/GenBank/DDBJ databases">
        <title>Complete sequence of the Bunyavirus, La Crosse virus, Human/78 strain.</title>
        <authorList>
            <person name="Hughes M.T."/>
            <person name="Kempf B.J."/>
            <person name="Blair C.D."/>
            <person name="Beaty B.J."/>
        </authorList>
    </citation>
    <scope>NUCLEOTIDE SEQUENCE [GENOMIC RNA]</scope>
</reference>
<reference key="2">
    <citation type="journal article" date="2007" name="Virol. J.">
        <title>Genome sequence analysis of La Crosse virus and in vitro and in vivo phenotypes.</title>
        <authorList>
            <person name="Bennett R.S."/>
            <person name="Ton D.R."/>
            <person name="Hanson C.T."/>
            <person name="Murphy B.R."/>
            <person name="Whitehead S.S."/>
        </authorList>
    </citation>
    <scope>NUCLEOTIDE SEQUENCE [GENOMIC RNA]</scope>
</reference>
<reference key="3">
    <citation type="journal article" date="2007" name="J. Virol.">
        <title>La Crosse bunyavirus nonstructural protein NSs serves to suppress the type I interferon system of mammalian hosts.</title>
        <authorList>
            <person name="Blakqori G."/>
            <person name="Delhaye S."/>
            <person name="Habjan M."/>
            <person name="Blair C.D."/>
            <person name="Sanchez-Vargas I."/>
            <person name="Olson K.E."/>
            <person name="Attarzadeh-Yazdi G."/>
            <person name="Fragkoudis R."/>
            <person name="Kohl A."/>
            <person name="Kalinke U."/>
            <person name="Weiss S."/>
            <person name="Michiels T."/>
            <person name="Staeheli P."/>
            <person name="Weber F."/>
        </authorList>
    </citation>
    <scope>FUNCTION</scope>
</reference>
<accession>Q8JPQ9</accession>
<keyword id="KW-1262">Eukaryotic host gene expression shutoff by virus</keyword>
<keyword id="KW-1191">Eukaryotic host transcription shutoff by virus</keyword>
<keyword id="KW-1190">Host gene expression shutoff by virus</keyword>
<keyword id="KW-0945">Host-virus interaction</keyword>
<keyword id="KW-1111">Inhibition of eukaryotic host transcription initiation by virus</keyword>
<keyword id="KW-1185">Reference proteome</keyword>
<organismHost>
    <name type="scientific">Cervidae</name>
    <name type="common">Deer</name>
    <dbReference type="NCBI Taxonomy" id="9850"/>
</organismHost>
<organismHost>
    <name type="scientific">Homo sapiens</name>
    <name type="common">Human</name>
    <dbReference type="NCBI Taxonomy" id="9606"/>
</organismHost>
<organismHost>
    <name type="scientific">Ochlerotatus triseriatus</name>
    <name type="common">Eastern treehole mosquito</name>
    <name type="synonym">Aedes triseriatus</name>
    <dbReference type="NCBI Taxonomy" id="7162"/>
</organismHost>
<organismHost>
    <name type="scientific">Tamias</name>
    <dbReference type="NCBI Taxonomy" id="13712"/>
</organismHost>
<dbReference type="EMBL" id="AF528167">
    <property type="protein sequence ID" value="AAM94390.1"/>
    <property type="molecule type" value="Genomic_RNA"/>
</dbReference>
<dbReference type="EMBL" id="EF485033">
    <property type="protein sequence ID" value="ABQ12633.1"/>
    <property type="molecule type" value="Viral_cRNA"/>
</dbReference>
<dbReference type="IntAct" id="Q8JPQ9">
    <property type="interactions" value="83"/>
</dbReference>
<dbReference type="KEGG" id="vg:956557"/>
<dbReference type="Proteomes" id="UP000008768">
    <property type="component" value="Genome"/>
</dbReference>
<dbReference type="Proteomes" id="UP000121242">
    <property type="component" value="Genome"/>
</dbReference>
<dbReference type="GO" id="GO:0039657">
    <property type="term" value="P:symbiont-mediated suppression of host gene expression"/>
    <property type="evidence" value="ECO:0007669"/>
    <property type="project" value="UniProtKB-KW"/>
</dbReference>
<dbReference type="GO" id="GO:0016032">
    <property type="term" value="P:viral process"/>
    <property type="evidence" value="ECO:0007669"/>
    <property type="project" value="InterPro"/>
</dbReference>
<dbReference type="InterPro" id="IPR000797">
    <property type="entry name" value="Bunya_NSs"/>
</dbReference>
<dbReference type="Pfam" id="PF01104">
    <property type="entry name" value="Bunya_NS-S"/>
    <property type="match status" value="1"/>
</dbReference>
<dbReference type="PIRSF" id="PIRSF003954">
    <property type="entry name" value="NS-S_OrthobunV"/>
    <property type="match status" value="1"/>
</dbReference>
<feature type="chain" id="PRO_0000397187" description="Non-structural protein NS-S">
    <location>
        <begin position="1"/>
        <end position="92"/>
    </location>
</feature>
<sequence>MMSHQQVQMDLILMQGIWTSVLKMQNYSTLLQLGSSSSMPQRPRLLSRVSQRGRLTLNLESGRWRLSIIIFLETGTTQLVTTILPSTDYLGI</sequence>
<gene>
    <name type="primary">N</name>
</gene>
<name>NSS_BUNL8</name>
<organism>
    <name type="scientific">Bunyavirus La Crosse (isolate Human/United States/L78/1978)</name>
    <dbReference type="NCBI Taxonomy" id="796210"/>
    <lineage>
        <taxon>Viruses</taxon>
        <taxon>Riboviria</taxon>
        <taxon>Orthornavirae</taxon>
        <taxon>Negarnaviricota</taxon>
        <taxon>Polyploviricotina</taxon>
        <taxon>Ellioviricetes</taxon>
        <taxon>Bunyavirales</taxon>
        <taxon>Peribunyaviridae</taxon>
        <taxon>Orthobunyavirus</taxon>
        <taxon>Orthobunyavirus lacrosseense</taxon>
    </lineage>
</organism>